<evidence type="ECO:0000255" key="1">
    <source>
        <dbReference type="HAMAP-Rule" id="MF_00621"/>
    </source>
</evidence>
<name>CODY_GEOTN</name>
<gene>
    <name evidence="1" type="primary">codY</name>
    <name type="ordered locus">GTNG_1068</name>
</gene>
<protein>
    <recommendedName>
        <fullName evidence="1">Global transcriptional regulator CodY</fullName>
    </recommendedName>
</protein>
<organism>
    <name type="scientific">Geobacillus thermodenitrificans (strain NG80-2)</name>
    <dbReference type="NCBI Taxonomy" id="420246"/>
    <lineage>
        <taxon>Bacteria</taxon>
        <taxon>Bacillati</taxon>
        <taxon>Bacillota</taxon>
        <taxon>Bacilli</taxon>
        <taxon>Bacillales</taxon>
        <taxon>Anoxybacillaceae</taxon>
        <taxon>Geobacillus</taxon>
    </lineage>
</organism>
<sequence length="259" mass="29152">MNLLEKTRKINAMLQKAAGRPVNFKEMAETLCDVIEANVFVVSRRGKLLGFAIKQSIENERMKRMLEERQFPEEYTRNLFNITETSPNIDINSEYTAFPVENRDLFKTGLTTIVPINGGGERLGTLILSRLDREFDNDDLILAEYGATVVGMEILREKAEEIEEEARSKAVVQMAISSLSYSELEAIEHIFEELDGTEGLLVASKIADRVGITRSVIVNALRKLESAGVIESRSLGMKGTYIKVLNDKFLTELEKLKSN</sequence>
<comment type="function">
    <text evidence="1">DNA-binding global transcriptional regulator which is involved in the adaptive response to starvation and acts by directly or indirectly controlling the expression of numerous genes in response to nutrient availability. During rapid exponential growth, CodY is highly active and represses genes whose products allow adaptation to nutrient depletion.</text>
</comment>
<comment type="subcellular location">
    <subcellularLocation>
        <location evidence="1">Cytoplasm</location>
    </subcellularLocation>
</comment>
<comment type="similarity">
    <text evidence="1">Belongs to the CodY family.</text>
</comment>
<dbReference type="EMBL" id="CP000557">
    <property type="protein sequence ID" value="ABO66444.1"/>
    <property type="molecule type" value="Genomic_DNA"/>
</dbReference>
<dbReference type="RefSeq" id="WP_008878594.1">
    <property type="nucleotide sequence ID" value="NC_009328.1"/>
</dbReference>
<dbReference type="SMR" id="A4IM90"/>
<dbReference type="GeneID" id="87621339"/>
<dbReference type="KEGG" id="gtn:GTNG_1068"/>
<dbReference type="eggNOG" id="COG4465">
    <property type="taxonomic scope" value="Bacteria"/>
</dbReference>
<dbReference type="HOGENOM" id="CLU_089581_0_0_9"/>
<dbReference type="Proteomes" id="UP000001578">
    <property type="component" value="Chromosome"/>
</dbReference>
<dbReference type="GO" id="GO:0005737">
    <property type="term" value="C:cytoplasm"/>
    <property type="evidence" value="ECO:0007669"/>
    <property type="project" value="UniProtKB-SubCell"/>
</dbReference>
<dbReference type="GO" id="GO:0003677">
    <property type="term" value="F:DNA binding"/>
    <property type="evidence" value="ECO:0007669"/>
    <property type="project" value="UniProtKB-UniRule"/>
</dbReference>
<dbReference type="GO" id="GO:0003700">
    <property type="term" value="F:DNA-binding transcription factor activity"/>
    <property type="evidence" value="ECO:0007669"/>
    <property type="project" value="InterPro"/>
</dbReference>
<dbReference type="GO" id="GO:0005525">
    <property type="term" value="F:GTP binding"/>
    <property type="evidence" value="ECO:0007669"/>
    <property type="project" value="InterPro"/>
</dbReference>
<dbReference type="GO" id="GO:0045892">
    <property type="term" value="P:negative regulation of DNA-templated transcription"/>
    <property type="evidence" value="ECO:0007669"/>
    <property type="project" value="UniProtKB-UniRule"/>
</dbReference>
<dbReference type="FunFam" id="1.10.10.10:FF:000034">
    <property type="entry name" value="GTP-sensing transcriptional pleiotropic repressor CodY"/>
    <property type="match status" value="1"/>
</dbReference>
<dbReference type="FunFam" id="3.30.450.40:FF:000003">
    <property type="entry name" value="GTP-sensing transcriptional pleiotropic repressor CodY"/>
    <property type="match status" value="1"/>
</dbReference>
<dbReference type="Gene3D" id="3.30.450.40">
    <property type="match status" value="1"/>
</dbReference>
<dbReference type="Gene3D" id="1.10.10.10">
    <property type="entry name" value="Winged helix-like DNA-binding domain superfamily/Winged helix DNA-binding domain"/>
    <property type="match status" value="1"/>
</dbReference>
<dbReference type="HAMAP" id="MF_00621">
    <property type="entry name" value="HTH_type_CodY"/>
    <property type="match status" value="1"/>
</dbReference>
<dbReference type="InterPro" id="IPR014154">
    <property type="entry name" value="CodY"/>
</dbReference>
<dbReference type="InterPro" id="IPR029016">
    <property type="entry name" value="GAF-like_dom_sf"/>
</dbReference>
<dbReference type="InterPro" id="IPR013198">
    <property type="entry name" value="GTP_trans_reg_CodY_C"/>
</dbReference>
<dbReference type="InterPro" id="IPR010312">
    <property type="entry name" value="Transc_reg_CodY_N"/>
</dbReference>
<dbReference type="InterPro" id="IPR036388">
    <property type="entry name" value="WH-like_DNA-bd_sf"/>
</dbReference>
<dbReference type="InterPro" id="IPR036390">
    <property type="entry name" value="WH_DNA-bd_sf"/>
</dbReference>
<dbReference type="NCBIfam" id="TIGR02787">
    <property type="entry name" value="codY_Gpos"/>
    <property type="match status" value="1"/>
</dbReference>
<dbReference type="NCBIfam" id="NF003170">
    <property type="entry name" value="PRK04158.1"/>
    <property type="match status" value="1"/>
</dbReference>
<dbReference type="PANTHER" id="PTHR40062:SF1">
    <property type="entry name" value="GLOBAL TRANSCRIPTIONAL REGULATOR CODY"/>
    <property type="match status" value="1"/>
</dbReference>
<dbReference type="PANTHER" id="PTHR40062">
    <property type="entry name" value="GTP-SENSING TRANSCRIPTIONAL PLEIOTROPIC REPRESSOR CODY"/>
    <property type="match status" value="1"/>
</dbReference>
<dbReference type="Pfam" id="PF06018">
    <property type="entry name" value="CodY"/>
    <property type="match status" value="1"/>
</dbReference>
<dbReference type="Pfam" id="PF08222">
    <property type="entry name" value="HTH_CodY"/>
    <property type="match status" value="1"/>
</dbReference>
<dbReference type="PIRSF" id="PIRSF011572">
    <property type="entry name" value="GTP_sensing_CodY"/>
    <property type="match status" value="1"/>
</dbReference>
<dbReference type="SUPFAM" id="SSF46785">
    <property type="entry name" value="Winged helix' DNA-binding domain"/>
    <property type="match status" value="1"/>
</dbReference>
<proteinExistence type="inferred from homology"/>
<keyword id="KW-0963">Cytoplasm</keyword>
<keyword id="KW-0238">DNA-binding</keyword>
<keyword id="KW-0597">Phosphoprotein</keyword>
<keyword id="KW-0678">Repressor</keyword>
<keyword id="KW-0804">Transcription</keyword>
<keyword id="KW-0805">Transcription regulation</keyword>
<reference key="1">
    <citation type="journal article" date="2007" name="Proc. Natl. Acad. Sci. U.S.A.">
        <title>Genome and proteome of long-chain alkane degrading Geobacillus thermodenitrificans NG80-2 isolated from a deep-subsurface oil reservoir.</title>
        <authorList>
            <person name="Feng L."/>
            <person name="Wang W."/>
            <person name="Cheng J."/>
            <person name="Ren Y."/>
            <person name="Zhao G."/>
            <person name="Gao C."/>
            <person name="Tang Y."/>
            <person name="Liu X."/>
            <person name="Han W."/>
            <person name="Peng X."/>
            <person name="Liu R."/>
            <person name="Wang L."/>
        </authorList>
    </citation>
    <scope>NUCLEOTIDE SEQUENCE [LARGE SCALE GENOMIC DNA]</scope>
    <source>
        <strain>NG80-2</strain>
    </source>
</reference>
<accession>A4IM90</accession>
<feature type="chain" id="PRO_1000051537" description="Global transcriptional regulator CodY">
    <location>
        <begin position="1"/>
        <end position="259"/>
    </location>
</feature>
<feature type="DNA-binding region" description="H-T-H motif" evidence="1">
    <location>
        <begin position="203"/>
        <end position="222"/>
    </location>
</feature>
<feature type="region of interest" description="GAF domain" evidence="1">
    <location>
        <begin position="1"/>
        <end position="155"/>
    </location>
</feature>
<feature type="modified residue" description="Phosphoserine" evidence="1">
    <location>
        <position position="215"/>
    </location>
</feature>